<proteinExistence type="inferred from homology"/>
<reference key="1">
    <citation type="submission" date="2007-06" db="EMBL/GenBank/DDBJ databases">
        <title>Complete sequence of chromosome of Staphylococcus aureus subsp. aureus JH1.</title>
        <authorList>
            <consortium name="US DOE Joint Genome Institute"/>
            <person name="Copeland A."/>
            <person name="Lucas S."/>
            <person name="Lapidus A."/>
            <person name="Barry K."/>
            <person name="Detter J.C."/>
            <person name="Glavina del Rio T."/>
            <person name="Hammon N."/>
            <person name="Israni S."/>
            <person name="Dalin E."/>
            <person name="Tice H."/>
            <person name="Pitluck S."/>
            <person name="Chain P."/>
            <person name="Malfatti S."/>
            <person name="Shin M."/>
            <person name="Vergez L."/>
            <person name="Schmutz J."/>
            <person name="Larimer F."/>
            <person name="Land M."/>
            <person name="Hauser L."/>
            <person name="Kyrpides N."/>
            <person name="Ivanova N."/>
            <person name="Tomasz A."/>
            <person name="Richardson P."/>
        </authorList>
    </citation>
    <scope>NUCLEOTIDE SEQUENCE [LARGE SCALE GENOMIC DNA]</scope>
    <source>
        <strain>JH1</strain>
    </source>
</reference>
<organism>
    <name type="scientific">Staphylococcus aureus (strain JH1)</name>
    <dbReference type="NCBI Taxonomy" id="359787"/>
    <lineage>
        <taxon>Bacteria</taxon>
        <taxon>Bacillati</taxon>
        <taxon>Bacillota</taxon>
        <taxon>Bacilli</taxon>
        <taxon>Bacillales</taxon>
        <taxon>Staphylococcaceae</taxon>
        <taxon>Staphylococcus</taxon>
    </lineage>
</organism>
<feature type="chain" id="PRO_1000088627" description="Tyrosine--tRNA ligase">
    <location>
        <begin position="1"/>
        <end position="420"/>
    </location>
</feature>
<feature type="domain" description="S4 RNA-binding" evidence="1">
    <location>
        <begin position="353"/>
        <end position="420"/>
    </location>
</feature>
<feature type="short sequence motif" description="'HIGH' region">
    <location>
        <begin position="41"/>
        <end position="50"/>
    </location>
</feature>
<feature type="short sequence motif" description="'KMSKS' region">
    <location>
        <begin position="231"/>
        <end position="235"/>
    </location>
</feature>
<feature type="binding site" evidence="1">
    <location>
        <position position="36"/>
    </location>
    <ligand>
        <name>L-tyrosine</name>
        <dbReference type="ChEBI" id="CHEBI:58315"/>
    </ligand>
</feature>
<feature type="binding site" evidence="1">
    <location>
        <position position="170"/>
    </location>
    <ligand>
        <name>L-tyrosine</name>
        <dbReference type="ChEBI" id="CHEBI:58315"/>
    </ligand>
</feature>
<feature type="binding site" evidence="1">
    <location>
        <position position="174"/>
    </location>
    <ligand>
        <name>L-tyrosine</name>
        <dbReference type="ChEBI" id="CHEBI:58315"/>
    </ligand>
</feature>
<feature type="binding site" evidence="1">
    <location>
        <position position="234"/>
    </location>
    <ligand>
        <name>ATP</name>
        <dbReference type="ChEBI" id="CHEBI:30616"/>
    </ligand>
</feature>
<sequence>MTNVLIEDLKWRGLIYQQTDEQGIEDLLNKEQVTLYCGADPTADSLHIGHLLPFLTLRRFQEHGHRPIVLIGGGTGMIGDPSGKSEERVLQTEEQVDKNIEGISKQMHNIFEFGTDHGAVLVNNRDWLGQISLISFLRDYGKHVGVNYMLGKDSIQSRLEHGISYTEFTYTILQAIDFGHLNRELNCKIQVGGSDQWGNITSGIELMRRMYGQTDAYGLTIPLVTKSDGKKFGKSESGAVWLDAEKTSPYEFYQFWINQSDEDVIKFLKYFTFLGKEEIDRLEQSKNEAPHLREAQKTLAEEVTKFIHGEDALNDAIRISQALFSGDLKSLSAKELKDGFKDVPQVTLSNDTTNIVEVLIETGISPSKRQAREDVNNGAIYINGERQQDVNYALAPEDKIDGEFTIIRRGKKKYFMVNYQ</sequence>
<accession>A6U2J5</accession>
<dbReference type="EC" id="6.1.1.1" evidence="1"/>
<dbReference type="EMBL" id="CP000736">
    <property type="protein sequence ID" value="ABR52663.1"/>
    <property type="molecule type" value="Genomic_DNA"/>
</dbReference>
<dbReference type="SMR" id="A6U2J5"/>
<dbReference type="KEGG" id="sah:SaurJH1_1819"/>
<dbReference type="HOGENOM" id="CLU_024003_0_3_9"/>
<dbReference type="GO" id="GO:0005829">
    <property type="term" value="C:cytosol"/>
    <property type="evidence" value="ECO:0007669"/>
    <property type="project" value="TreeGrafter"/>
</dbReference>
<dbReference type="GO" id="GO:0005524">
    <property type="term" value="F:ATP binding"/>
    <property type="evidence" value="ECO:0007669"/>
    <property type="project" value="UniProtKB-UniRule"/>
</dbReference>
<dbReference type="GO" id="GO:0003723">
    <property type="term" value="F:RNA binding"/>
    <property type="evidence" value="ECO:0007669"/>
    <property type="project" value="UniProtKB-KW"/>
</dbReference>
<dbReference type="GO" id="GO:0004831">
    <property type="term" value="F:tyrosine-tRNA ligase activity"/>
    <property type="evidence" value="ECO:0007669"/>
    <property type="project" value="UniProtKB-UniRule"/>
</dbReference>
<dbReference type="GO" id="GO:0006437">
    <property type="term" value="P:tyrosyl-tRNA aminoacylation"/>
    <property type="evidence" value="ECO:0007669"/>
    <property type="project" value="UniProtKB-UniRule"/>
</dbReference>
<dbReference type="CDD" id="cd00165">
    <property type="entry name" value="S4"/>
    <property type="match status" value="1"/>
</dbReference>
<dbReference type="CDD" id="cd00395">
    <property type="entry name" value="Tyr_Trp_RS_core"/>
    <property type="match status" value="1"/>
</dbReference>
<dbReference type="FunFam" id="1.10.240.10:FF:000001">
    <property type="entry name" value="Tyrosine--tRNA ligase"/>
    <property type="match status" value="1"/>
</dbReference>
<dbReference type="FunFam" id="3.10.290.10:FF:000012">
    <property type="entry name" value="Tyrosine--tRNA ligase"/>
    <property type="match status" value="1"/>
</dbReference>
<dbReference type="FunFam" id="3.40.50.620:FF:000008">
    <property type="entry name" value="Tyrosine--tRNA ligase"/>
    <property type="match status" value="1"/>
</dbReference>
<dbReference type="Gene3D" id="3.40.50.620">
    <property type="entry name" value="HUPs"/>
    <property type="match status" value="1"/>
</dbReference>
<dbReference type="Gene3D" id="3.10.290.10">
    <property type="entry name" value="RNA-binding S4 domain"/>
    <property type="match status" value="1"/>
</dbReference>
<dbReference type="Gene3D" id="1.10.240.10">
    <property type="entry name" value="Tyrosyl-Transfer RNA Synthetase"/>
    <property type="match status" value="1"/>
</dbReference>
<dbReference type="HAMAP" id="MF_02006">
    <property type="entry name" value="Tyr_tRNA_synth_type1"/>
    <property type="match status" value="1"/>
</dbReference>
<dbReference type="InterPro" id="IPR001412">
    <property type="entry name" value="aa-tRNA-synth_I_CS"/>
</dbReference>
<dbReference type="InterPro" id="IPR002305">
    <property type="entry name" value="aa-tRNA-synth_Ic"/>
</dbReference>
<dbReference type="InterPro" id="IPR014729">
    <property type="entry name" value="Rossmann-like_a/b/a_fold"/>
</dbReference>
<dbReference type="InterPro" id="IPR002942">
    <property type="entry name" value="S4_RNA-bd"/>
</dbReference>
<dbReference type="InterPro" id="IPR036986">
    <property type="entry name" value="S4_RNA-bd_sf"/>
</dbReference>
<dbReference type="InterPro" id="IPR054608">
    <property type="entry name" value="SYY-like_C"/>
</dbReference>
<dbReference type="InterPro" id="IPR002307">
    <property type="entry name" value="Tyr-tRNA-ligase"/>
</dbReference>
<dbReference type="InterPro" id="IPR024088">
    <property type="entry name" value="Tyr-tRNA-ligase_bac-type"/>
</dbReference>
<dbReference type="InterPro" id="IPR024107">
    <property type="entry name" value="Tyr-tRNA-ligase_bac_1"/>
</dbReference>
<dbReference type="NCBIfam" id="TIGR00234">
    <property type="entry name" value="tyrS"/>
    <property type="match status" value="1"/>
</dbReference>
<dbReference type="PANTHER" id="PTHR11766:SF0">
    <property type="entry name" value="TYROSINE--TRNA LIGASE, MITOCHONDRIAL"/>
    <property type="match status" value="1"/>
</dbReference>
<dbReference type="PANTHER" id="PTHR11766">
    <property type="entry name" value="TYROSYL-TRNA SYNTHETASE"/>
    <property type="match status" value="1"/>
</dbReference>
<dbReference type="Pfam" id="PF22421">
    <property type="entry name" value="SYY_C-terminal"/>
    <property type="match status" value="1"/>
</dbReference>
<dbReference type="Pfam" id="PF00579">
    <property type="entry name" value="tRNA-synt_1b"/>
    <property type="match status" value="1"/>
</dbReference>
<dbReference type="PRINTS" id="PR01040">
    <property type="entry name" value="TRNASYNTHTYR"/>
</dbReference>
<dbReference type="SMART" id="SM00363">
    <property type="entry name" value="S4"/>
    <property type="match status" value="1"/>
</dbReference>
<dbReference type="SUPFAM" id="SSF55174">
    <property type="entry name" value="Alpha-L RNA-binding motif"/>
    <property type="match status" value="1"/>
</dbReference>
<dbReference type="SUPFAM" id="SSF52374">
    <property type="entry name" value="Nucleotidylyl transferase"/>
    <property type="match status" value="1"/>
</dbReference>
<dbReference type="PROSITE" id="PS00178">
    <property type="entry name" value="AA_TRNA_LIGASE_I"/>
    <property type="match status" value="1"/>
</dbReference>
<dbReference type="PROSITE" id="PS50889">
    <property type="entry name" value="S4"/>
    <property type="match status" value="1"/>
</dbReference>
<keyword id="KW-0030">Aminoacyl-tRNA synthetase</keyword>
<keyword id="KW-0067">ATP-binding</keyword>
<keyword id="KW-0963">Cytoplasm</keyword>
<keyword id="KW-0436">Ligase</keyword>
<keyword id="KW-0547">Nucleotide-binding</keyword>
<keyword id="KW-0648">Protein biosynthesis</keyword>
<keyword id="KW-0694">RNA-binding</keyword>
<gene>
    <name evidence="1" type="primary">tyrS</name>
    <name type="ordered locus">SaurJH1_1819</name>
</gene>
<evidence type="ECO:0000255" key="1">
    <source>
        <dbReference type="HAMAP-Rule" id="MF_02006"/>
    </source>
</evidence>
<comment type="function">
    <text evidence="1">Catalyzes the attachment of tyrosine to tRNA(Tyr) in a two-step reaction: tyrosine is first activated by ATP to form Tyr-AMP and then transferred to the acceptor end of tRNA(Tyr).</text>
</comment>
<comment type="catalytic activity">
    <reaction evidence="1">
        <text>tRNA(Tyr) + L-tyrosine + ATP = L-tyrosyl-tRNA(Tyr) + AMP + diphosphate + H(+)</text>
        <dbReference type="Rhea" id="RHEA:10220"/>
        <dbReference type="Rhea" id="RHEA-COMP:9706"/>
        <dbReference type="Rhea" id="RHEA-COMP:9707"/>
        <dbReference type="ChEBI" id="CHEBI:15378"/>
        <dbReference type="ChEBI" id="CHEBI:30616"/>
        <dbReference type="ChEBI" id="CHEBI:33019"/>
        <dbReference type="ChEBI" id="CHEBI:58315"/>
        <dbReference type="ChEBI" id="CHEBI:78442"/>
        <dbReference type="ChEBI" id="CHEBI:78536"/>
        <dbReference type="ChEBI" id="CHEBI:456215"/>
        <dbReference type="EC" id="6.1.1.1"/>
    </reaction>
</comment>
<comment type="subunit">
    <text evidence="1">Homodimer.</text>
</comment>
<comment type="subcellular location">
    <subcellularLocation>
        <location evidence="1">Cytoplasm</location>
    </subcellularLocation>
</comment>
<comment type="similarity">
    <text evidence="1">Belongs to the class-I aminoacyl-tRNA synthetase family. TyrS type 1 subfamily.</text>
</comment>
<protein>
    <recommendedName>
        <fullName evidence="1">Tyrosine--tRNA ligase</fullName>
        <ecNumber evidence="1">6.1.1.1</ecNumber>
    </recommendedName>
    <alternativeName>
        <fullName evidence="1">Tyrosyl-tRNA synthetase</fullName>
        <shortName evidence="1">TyrRS</shortName>
    </alternativeName>
</protein>
<name>SYY_STAA2</name>